<dbReference type="EMBL" id="CU928145">
    <property type="protein sequence ID" value="CAU99825.1"/>
    <property type="molecule type" value="Genomic_DNA"/>
</dbReference>
<dbReference type="RefSeq" id="WP_000271401.1">
    <property type="nucleotide sequence ID" value="NZ_CP028304.1"/>
</dbReference>
<dbReference type="SMR" id="B7LHP9"/>
<dbReference type="GeneID" id="93778795"/>
<dbReference type="KEGG" id="eck:EC55989_3604"/>
<dbReference type="HOGENOM" id="CLU_061463_3_3_6"/>
<dbReference type="Proteomes" id="UP000000746">
    <property type="component" value="Chromosome"/>
</dbReference>
<dbReference type="GO" id="GO:0005737">
    <property type="term" value="C:cytoplasm"/>
    <property type="evidence" value="ECO:0007669"/>
    <property type="project" value="UniProtKB-ARBA"/>
</dbReference>
<dbReference type="GO" id="GO:1990904">
    <property type="term" value="C:ribonucleoprotein complex"/>
    <property type="evidence" value="ECO:0007669"/>
    <property type="project" value="UniProtKB-KW"/>
</dbReference>
<dbReference type="GO" id="GO:0005840">
    <property type="term" value="C:ribosome"/>
    <property type="evidence" value="ECO:0007669"/>
    <property type="project" value="UniProtKB-KW"/>
</dbReference>
<dbReference type="GO" id="GO:0019843">
    <property type="term" value="F:rRNA binding"/>
    <property type="evidence" value="ECO:0007669"/>
    <property type="project" value="UniProtKB-UniRule"/>
</dbReference>
<dbReference type="GO" id="GO:0003735">
    <property type="term" value="F:structural constituent of ribosome"/>
    <property type="evidence" value="ECO:0007669"/>
    <property type="project" value="InterPro"/>
</dbReference>
<dbReference type="GO" id="GO:0006412">
    <property type="term" value="P:translation"/>
    <property type="evidence" value="ECO:0007669"/>
    <property type="project" value="UniProtKB-UniRule"/>
</dbReference>
<dbReference type="HAMAP" id="MF_01363">
    <property type="entry name" value="Ribosomal_bL21"/>
    <property type="match status" value="1"/>
</dbReference>
<dbReference type="InterPro" id="IPR028909">
    <property type="entry name" value="bL21-like"/>
</dbReference>
<dbReference type="InterPro" id="IPR036164">
    <property type="entry name" value="bL21-like_sf"/>
</dbReference>
<dbReference type="InterPro" id="IPR001787">
    <property type="entry name" value="Ribosomal_bL21"/>
</dbReference>
<dbReference type="InterPro" id="IPR018258">
    <property type="entry name" value="Ribosomal_bL21_CS"/>
</dbReference>
<dbReference type="NCBIfam" id="TIGR00061">
    <property type="entry name" value="L21"/>
    <property type="match status" value="1"/>
</dbReference>
<dbReference type="PANTHER" id="PTHR21349">
    <property type="entry name" value="50S RIBOSOMAL PROTEIN L21"/>
    <property type="match status" value="1"/>
</dbReference>
<dbReference type="PANTHER" id="PTHR21349:SF0">
    <property type="entry name" value="LARGE RIBOSOMAL SUBUNIT PROTEIN BL21M"/>
    <property type="match status" value="1"/>
</dbReference>
<dbReference type="Pfam" id="PF00829">
    <property type="entry name" value="Ribosomal_L21p"/>
    <property type="match status" value="1"/>
</dbReference>
<dbReference type="SUPFAM" id="SSF141091">
    <property type="entry name" value="L21p-like"/>
    <property type="match status" value="1"/>
</dbReference>
<dbReference type="PROSITE" id="PS01169">
    <property type="entry name" value="RIBOSOMAL_L21"/>
    <property type="match status" value="1"/>
</dbReference>
<protein>
    <recommendedName>
        <fullName evidence="1">Large ribosomal subunit protein bL21</fullName>
    </recommendedName>
    <alternativeName>
        <fullName evidence="2">50S ribosomal protein L21</fullName>
    </alternativeName>
</protein>
<accession>B7LHP9</accession>
<reference key="1">
    <citation type="journal article" date="2009" name="PLoS Genet.">
        <title>Organised genome dynamics in the Escherichia coli species results in highly diverse adaptive paths.</title>
        <authorList>
            <person name="Touchon M."/>
            <person name="Hoede C."/>
            <person name="Tenaillon O."/>
            <person name="Barbe V."/>
            <person name="Baeriswyl S."/>
            <person name="Bidet P."/>
            <person name="Bingen E."/>
            <person name="Bonacorsi S."/>
            <person name="Bouchier C."/>
            <person name="Bouvet O."/>
            <person name="Calteau A."/>
            <person name="Chiapello H."/>
            <person name="Clermont O."/>
            <person name="Cruveiller S."/>
            <person name="Danchin A."/>
            <person name="Diard M."/>
            <person name="Dossat C."/>
            <person name="Karoui M.E."/>
            <person name="Frapy E."/>
            <person name="Garry L."/>
            <person name="Ghigo J.M."/>
            <person name="Gilles A.M."/>
            <person name="Johnson J."/>
            <person name="Le Bouguenec C."/>
            <person name="Lescat M."/>
            <person name="Mangenot S."/>
            <person name="Martinez-Jehanne V."/>
            <person name="Matic I."/>
            <person name="Nassif X."/>
            <person name="Oztas S."/>
            <person name="Petit M.A."/>
            <person name="Pichon C."/>
            <person name="Rouy Z."/>
            <person name="Ruf C.S."/>
            <person name="Schneider D."/>
            <person name="Tourret J."/>
            <person name="Vacherie B."/>
            <person name="Vallenet D."/>
            <person name="Medigue C."/>
            <person name="Rocha E.P.C."/>
            <person name="Denamur E."/>
        </authorList>
    </citation>
    <scope>NUCLEOTIDE SEQUENCE [LARGE SCALE GENOMIC DNA]</scope>
    <source>
        <strain>55989 / EAEC</strain>
    </source>
</reference>
<feature type="chain" id="PRO_1000166722" description="Large ribosomal subunit protein bL21">
    <location>
        <begin position="1"/>
        <end position="103"/>
    </location>
</feature>
<proteinExistence type="inferred from homology"/>
<gene>
    <name evidence="1" type="primary">rplU</name>
    <name type="ordered locus">EC55989_3604</name>
</gene>
<comment type="function">
    <text evidence="1">This protein binds to 23S rRNA in the presence of protein L20.</text>
</comment>
<comment type="subunit">
    <text evidence="1">Part of the 50S ribosomal subunit. Contacts protein L20.</text>
</comment>
<comment type="similarity">
    <text evidence="1">Belongs to the bacterial ribosomal protein bL21 family.</text>
</comment>
<keyword id="KW-1185">Reference proteome</keyword>
<keyword id="KW-0687">Ribonucleoprotein</keyword>
<keyword id="KW-0689">Ribosomal protein</keyword>
<keyword id="KW-0694">RNA-binding</keyword>
<keyword id="KW-0699">rRNA-binding</keyword>
<evidence type="ECO:0000255" key="1">
    <source>
        <dbReference type="HAMAP-Rule" id="MF_01363"/>
    </source>
</evidence>
<evidence type="ECO:0000305" key="2"/>
<organism>
    <name type="scientific">Escherichia coli (strain 55989 / EAEC)</name>
    <dbReference type="NCBI Taxonomy" id="585055"/>
    <lineage>
        <taxon>Bacteria</taxon>
        <taxon>Pseudomonadati</taxon>
        <taxon>Pseudomonadota</taxon>
        <taxon>Gammaproteobacteria</taxon>
        <taxon>Enterobacterales</taxon>
        <taxon>Enterobacteriaceae</taxon>
        <taxon>Escherichia</taxon>
    </lineage>
</organism>
<sequence length="103" mass="11564">MYAVFQSGGKQHRVSEGQTVRLEKLDIATGETVEFAEVLMIANGEEVKIGVPFVDGGVIKAEVVAHGRGEKVKIVKFRRRKHYRKQQGHRQWFTDVKITGISA</sequence>
<name>RL21_ECO55</name>